<keyword id="KW-0067">ATP-binding</keyword>
<keyword id="KW-0496">Mitochondrion</keyword>
<keyword id="KW-0520">NAD</keyword>
<keyword id="KW-0547">Nucleotide-binding</keyword>
<keyword id="KW-0560">Oxidoreductase</keyword>
<keyword id="KW-1185">Reference proteome</keyword>
<keyword id="KW-0809">Transit peptide</keyword>
<proteinExistence type="evidence at protein level"/>
<evidence type="ECO:0000250" key="1"/>
<evidence type="ECO:0000255" key="2"/>
<evidence type="ECO:0000255" key="3">
    <source>
        <dbReference type="PROSITE-ProRule" id="PRU10011"/>
    </source>
</evidence>
<evidence type="ECO:0000269" key="4">
    <source>
    </source>
</evidence>
<evidence type="ECO:0000269" key="5">
    <source>
    </source>
</evidence>
<evidence type="ECO:0000305" key="6"/>
<name>DHE3_DICDI</name>
<reference key="1">
    <citation type="journal article" date="2005" name="Nature">
        <title>The genome of the social amoeba Dictyostelium discoideum.</title>
        <authorList>
            <person name="Eichinger L."/>
            <person name="Pachebat J.A."/>
            <person name="Gloeckner G."/>
            <person name="Rajandream M.A."/>
            <person name="Sucgang R."/>
            <person name="Berriman M."/>
            <person name="Song J."/>
            <person name="Olsen R."/>
            <person name="Szafranski K."/>
            <person name="Xu Q."/>
            <person name="Tunggal B."/>
            <person name="Kummerfeld S."/>
            <person name="Madera M."/>
            <person name="Konfortov B.A."/>
            <person name="Rivero F."/>
            <person name="Bankier A.T."/>
            <person name="Lehmann R."/>
            <person name="Hamlin N."/>
            <person name="Davies R."/>
            <person name="Gaudet P."/>
            <person name="Fey P."/>
            <person name="Pilcher K."/>
            <person name="Chen G."/>
            <person name="Saunders D."/>
            <person name="Sodergren E.J."/>
            <person name="Davis P."/>
            <person name="Kerhornou A."/>
            <person name="Nie X."/>
            <person name="Hall N."/>
            <person name="Anjard C."/>
            <person name="Hemphill L."/>
            <person name="Bason N."/>
            <person name="Farbrother P."/>
            <person name="Desany B."/>
            <person name="Just E."/>
            <person name="Morio T."/>
            <person name="Rost R."/>
            <person name="Churcher C.M."/>
            <person name="Cooper J."/>
            <person name="Haydock S."/>
            <person name="van Driessche N."/>
            <person name="Cronin A."/>
            <person name="Goodhead I."/>
            <person name="Muzny D.M."/>
            <person name="Mourier T."/>
            <person name="Pain A."/>
            <person name="Lu M."/>
            <person name="Harper D."/>
            <person name="Lindsay R."/>
            <person name="Hauser H."/>
            <person name="James K.D."/>
            <person name="Quiles M."/>
            <person name="Madan Babu M."/>
            <person name="Saito T."/>
            <person name="Buchrieser C."/>
            <person name="Wardroper A."/>
            <person name="Felder M."/>
            <person name="Thangavelu M."/>
            <person name="Johnson D."/>
            <person name="Knights A."/>
            <person name="Loulseged H."/>
            <person name="Mungall K.L."/>
            <person name="Oliver K."/>
            <person name="Price C."/>
            <person name="Quail M.A."/>
            <person name="Urushihara H."/>
            <person name="Hernandez J."/>
            <person name="Rabbinowitsch E."/>
            <person name="Steffen D."/>
            <person name="Sanders M."/>
            <person name="Ma J."/>
            <person name="Kohara Y."/>
            <person name="Sharp S."/>
            <person name="Simmonds M.N."/>
            <person name="Spiegler S."/>
            <person name="Tivey A."/>
            <person name="Sugano S."/>
            <person name="White B."/>
            <person name="Walker D."/>
            <person name="Woodward J.R."/>
            <person name="Winckler T."/>
            <person name="Tanaka Y."/>
            <person name="Shaulsky G."/>
            <person name="Schleicher M."/>
            <person name="Weinstock G.M."/>
            <person name="Rosenthal A."/>
            <person name="Cox E.C."/>
            <person name="Chisholm R.L."/>
            <person name="Gibbs R.A."/>
            <person name="Loomis W.F."/>
            <person name="Platzer M."/>
            <person name="Kay R.R."/>
            <person name="Williams J.G."/>
            <person name="Dear P.H."/>
            <person name="Noegel A.A."/>
            <person name="Barrell B.G."/>
            <person name="Kuspa A."/>
        </authorList>
    </citation>
    <scope>NUCLEOTIDE SEQUENCE [LARGE SCALE GENOMIC DNA]</scope>
    <source>
        <strain>AX4</strain>
    </source>
</reference>
<reference key="2">
    <citation type="journal article" date="1991" name="Arch. Biochem. Biophys.">
        <title>The NAD-dependent glutamate dehydrogenase from Dictyostelium discoideum: purification and properties.</title>
        <authorList>
            <person name="Pamula F."/>
            <person name="Wheldrake J.F."/>
        </authorList>
    </citation>
    <scope>SUBUNIT</scope>
    <scope>BIOPHYSICOCHEMICAL PROPERTIES</scope>
    <scope>ACTIVITY REGULATION</scope>
</reference>
<reference key="3">
    <citation type="journal article" date="1992" name="J. Gen. Microbiol.">
        <title>The effect of AMP on the NAD-dependent glutamate dehydrogenase during activation and morphogenesis in the cellular slime moulds.</title>
        <authorList>
            <person name="Pamula F."/>
            <person name="Wheldrake J.F."/>
        </authorList>
    </citation>
    <scope>ACTIVITY REGULATION</scope>
</reference>
<organism>
    <name type="scientific">Dictyostelium discoideum</name>
    <name type="common">Social amoeba</name>
    <dbReference type="NCBI Taxonomy" id="44689"/>
    <lineage>
        <taxon>Eukaryota</taxon>
        <taxon>Amoebozoa</taxon>
        <taxon>Evosea</taxon>
        <taxon>Eumycetozoa</taxon>
        <taxon>Dictyostelia</taxon>
        <taxon>Dictyosteliales</taxon>
        <taxon>Dictyosteliaceae</taxon>
        <taxon>Dictyostelium</taxon>
    </lineage>
</organism>
<accession>Q54KB7</accession>
<feature type="transit peptide" description="Mitochondrion" evidence="2">
    <location>
        <begin position="1"/>
        <end status="unknown"/>
    </location>
</feature>
<feature type="chain" id="PRO_0000327666" description="Glutamate dehydrogenase, mitochondrial">
    <location>
        <begin status="unknown"/>
        <end position="502"/>
    </location>
</feature>
<feature type="active site" evidence="3">
    <location>
        <position position="138"/>
    </location>
</feature>
<feature type="binding site" evidence="1">
    <location>
        <begin position="96"/>
        <end position="98"/>
    </location>
    <ligand>
        <name>NAD(+)</name>
        <dbReference type="ChEBI" id="CHEBI:57540"/>
    </ligand>
</feature>
<feature type="binding site" evidence="1">
    <location>
        <position position="102"/>
    </location>
    <ligand>
        <name>substrate</name>
    </ligand>
</feature>
<feature type="binding site" evidence="1">
    <location>
        <position position="126"/>
    </location>
    <ligand>
        <name>substrate</name>
    </ligand>
</feature>
<feature type="binding site" evidence="1">
    <location>
        <position position="131"/>
    </location>
    <ligand>
        <name>NAD(+)</name>
        <dbReference type="ChEBI" id="CHEBI:57540"/>
    </ligand>
</feature>
<feature type="binding site" evidence="1">
    <location>
        <position position="394"/>
    </location>
    <ligand>
        <name>substrate</name>
    </ligand>
</feature>
<sequence>MQSLARLSRTSLVQKGLVPQTIKNYSSVSQAEIDNEPRFLECFKTFFDKAAGLTNLKPGVLNNMKECNVALRVEFPIKNEHGDVDIIAGYRAQHSHHRLPCKGGIRFSEEVDLQEVMALASLMTYKCAVVDVPFGGAKGGVRIDPKKYTVAQREKITRAYTLLLCQKNFIGPGVDVPAPDMGTGEQEMAWIRDTYQAFNTNDVDSMACVTGKPISSGGIRGRTEATGLGVFYGIREFLSYEEVLKKTGLTPGIKGKSIVIQGFGNVGYFAAKFFEQAGAKVIAVAEHNGAVYNADGLNIDALNKYKLQHGTFIDFPGATNIVDSVKALEIPCDILIPAALEKQIHIGNVADIQAKLIGEAANGPMTPRADQILLNRGHVIIPDLLLNAGGVTVSYFEWLKNLSHVRFGRLNKKWEESSKKLLLEFVESTVNKKLSEAERSLIIHGADEIDIVRSGLEDTMQNACAETRKTANEKNTDYRSAALYNAIMKIKAVYESSGNVFS</sequence>
<dbReference type="EC" id="1.4.1.3"/>
<dbReference type="EMBL" id="AAFI02000101">
    <property type="protein sequence ID" value="EAL63700.1"/>
    <property type="molecule type" value="Genomic_DNA"/>
</dbReference>
<dbReference type="SMR" id="Q54KB7"/>
<dbReference type="FunCoup" id="Q54KB7">
    <property type="interactions" value="328"/>
</dbReference>
<dbReference type="STRING" id="44689.Q54KB7"/>
<dbReference type="PaxDb" id="44689-DDB0231438"/>
<dbReference type="EnsemblProtists" id="EAL63700">
    <property type="protein sequence ID" value="EAL63700"/>
    <property type="gene ID" value="DDB_G0287469"/>
</dbReference>
<dbReference type="KEGG" id="ddi:DDB_G0287469"/>
<dbReference type="dictyBase" id="DDB_G0287469">
    <property type="gene designation" value="glud1"/>
</dbReference>
<dbReference type="VEuPathDB" id="AmoebaDB:DDB_G0287469"/>
<dbReference type="eggNOG" id="KOG2250">
    <property type="taxonomic scope" value="Eukaryota"/>
</dbReference>
<dbReference type="HOGENOM" id="CLU_025763_1_0_1"/>
<dbReference type="InParanoid" id="Q54KB7"/>
<dbReference type="OMA" id="WMVYKCA"/>
<dbReference type="PhylomeDB" id="Q54KB7"/>
<dbReference type="Reactome" id="R-DDI-2151201">
    <property type="pathway name" value="Transcriptional activation of mitochondrial biogenesis"/>
</dbReference>
<dbReference type="Reactome" id="R-DDI-8964539">
    <property type="pathway name" value="Glutamate and glutamine metabolism"/>
</dbReference>
<dbReference type="Reactome" id="R-DDI-9837999">
    <property type="pathway name" value="Mitochondrial protein degradation"/>
</dbReference>
<dbReference type="SABIO-RK" id="Q54KB7"/>
<dbReference type="PRO" id="PR:Q54KB7"/>
<dbReference type="Proteomes" id="UP000002195">
    <property type="component" value="Chromosome 5"/>
</dbReference>
<dbReference type="GO" id="GO:0031012">
    <property type="term" value="C:extracellular matrix"/>
    <property type="evidence" value="ECO:0007005"/>
    <property type="project" value="dictyBase"/>
</dbReference>
<dbReference type="GO" id="GO:0005759">
    <property type="term" value="C:mitochondrial matrix"/>
    <property type="evidence" value="ECO:0007669"/>
    <property type="project" value="UniProtKB-SubCell"/>
</dbReference>
<dbReference type="GO" id="GO:0005739">
    <property type="term" value="C:mitochondrion"/>
    <property type="evidence" value="ECO:0000250"/>
    <property type="project" value="dictyBase"/>
</dbReference>
<dbReference type="GO" id="GO:0045335">
    <property type="term" value="C:phagocytic vesicle"/>
    <property type="evidence" value="ECO:0007005"/>
    <property type="project" value="dictyBase"/>
</dbReference>
<dbReference type="GO" id="GO:0005524">
    <property type="term" value="F:ATP binding"/>
    <property type="evidence" value="ECO:0007669"/>
    <property type="project" value="UniProtKB-KW"/>
</dbReference>
<dbReference type="GO" id="GO:0004352">
    <property type="term" value="F:glutamate dehydrogenase (NAD+) activity"/>
    <property type="evidence" value="ECO:0000318"/>
    <property type="project" value="GO_Central"/>
</dbReference>
<dbReference type="GO" id="GO:0004354">
    <property type="term" value="F:glutamate dehydrogenase (NADP+) activity"/>
    <property type="evidence" value="ECO:0007669"/>
    <property type="project" value="RHEA"/>
</dbReference>
<dbReference type="GO" id="GO:0004353">
    <property type="term" value="F:glutamate dehydrogenase [NAD(P)+] activity"/>
    <property type="evidence" value="ECO:0000314"/>
    <property type="project" value="dictyBase"/>
</dbReference>
<dbReference type="GO" id="GO:0006538">
    <property type="term" value="P:glutamate catabolic process"/>
    <property type="evidence" value="ECO:0000250"/>
    <property type="project" value="dictyBase"/>
</dbReference>
<dbReference type="CDD" id="cd01076">
    <property type="entry name" value="NAD_bind_1_Glu_DH"/>
    <property type="match status" value="1"/>
</dbReference>
<dbReference type="FunFam" id="3.40.50.10860:FF:000003">
    <property type="entry name" value="Glutamate dehydrogenase"/>
    <property type="match status" value="1"/>
</dbReference>
<dbReference type="FunFam" id="3.40.50.720:FF:000100">
    <property type="entry name" value="Glutamate dehydrogenase 1, mitochondrial"/>
    <property type="match status" value="1"/>
</dbReference>
<dbReference type="Gene3D" id="3.40.50.10860">
    <property type="entry name" value="Leucine Dehydrogenase, chain A, domain 1"/>
    <property type="match status" value="1"/>
</dbReference>
<dbReference type="Gene3D" id="3.40.50.720">
    <property type="entry name" value="NAD(P)-binding Rossmann-like Domain"/>
    <property type="match status" value="1"/>
</dbReference>
<dbReference type="InterPro" id="IPR046346">
    <property type="entry name" value="Aminoacid_DH-like_N_sf"/>
</dbReference>
<dbReference type="InterPro" id="IPR006095">
    <property type="entry name" value="Glu/Leu/Phe/Val/Trp_DH"/>
</dbReference>
<dbReference type="InterPro" id="IPR006096">
    <property type="entry name" value="Glu/Leu/Phe/Val/Trp_DH_C"/>
</dbReference>
<dbReference type="InterPro" id="IPR006097">
    <property type="entry name" value="Glu/Leu/Phe/Val/Trp_DH_dimer"/>
</dbReference>
<dbReference type="InterPro" id="IPR033524">
    <property type="entry name" value="Glu/Leu/Phe/Val_DH_AS"/>
</dbReference>
<dbReference type="InterPro" id="IPR014362">
    <property type="entry name" value="Glu_DH"/>
</dbReference>
<dbReference type="InterPro" id="IPR036291">
    <property type="entry name" value="NAD(P)-bd_dom_sf"/>
</dbReference>
<dbReference type="InterPro" id="IPR033922">
    <property type="entry name" value="NAD_bind_Glu_DH"/>
</dbReference>
<dbReference type="PANTHER" id="PTHR11606">
    <property type="entry name" value="GLUTAMATE DEHYDROGENASE"/>
    <property type="match status" value="1"/>
</dbReference>
<dbReference type="PANTHER" id="PTHR11606:SF13">
    <property type="entry name" value="GLUTAMATE DEHYDROGENASE 1, MITOCHONDRIAL"/>
    <property type="match status" value="1"/>
</dbReference>
<dbReference type="Pfam" id="PF00208">
    <property type="entry name" value="ELFV_dehydrog"/>
    <property type="match status" value="1"/>
</dbReference>
<dbReference type="Pfam" id="PF02812">
    <property type="entry name" value="ELFV_dehydrog_N"/>
    <property type="match status" value="1"/>
</dbReference>
<dbReference type="PIRSF" id="PIRSF000185">
    <property type="entry name" value="Glu_DH"/>
    <property type="match status" value="1"/>
</dbReference>
<dbReference type="PRINTS" id="PR00082">
    <property type="entry name" value="GLFDHDRGNASE"/>
</dbReference>
<dbReference type="SMART" id="SM00839">
    <property type="entry name" value="ELFV_dehydrog"/>
    <property type="match status" value="1"/>
</dbReference>
<dbReference type="SUPFAM" id="SSF53223">
    <property type="entry name" value="Aminoacid dehydrogenase-like, N-terminal domain"/>
    <property type="match status" value="1"/>
</dbReference>
<dbReference type="SUPFAM" id="SSF51735">
    <property type="entry name" value="NAD(P)-binding Rossmann-fold domains"/>
    <property type="match status" value="1"/>
</dbReference>
<dbReference type="PROSITE" id="PS00074">
    <property type="entry name" value="GLFV_DEHYDROGENASE"/>
    <property type="match status" value="1"/>
</dbReference>
<protein>
    <recommendedName>
        <fullName>Glutamate dehydrogenase, mitochondrial</fullName>
        <shortName>GDH</shortName>
        <ecNumber>1.4.1.3</ecNumber>
    </recommendedName>
</protein>
<gene>
    <name type="primary">gluD</name>
    <name type="ORF">DDB_G0287469</name>
</gene>
<comment type="catalytic activity">
    <reaction evidence="3">
        <text>L-glutamate + NAD(+) + H2O = 2-oxoglutarate + NH4(+) + NADH + H(+)</text>
        <dbReference type="Rhea" id="RHEA:15133"/>
        <dbReference type="ChEBI" id="CHEBI:15377"/>
        <dbReference type="ChEBI" id="CHEBI:15378"/>
        <dbReference type="ChEBI" id="CHEBI:16810"/>
        <dbReference type="ChEBI" id="CHEBI:28938"/>
        <dbReference type="ChEBI" id="CHEBI:29985"/>
        <dbReference type="ChEBI" id="CHEBI:57540"/>
        <dbReference type="ChEBI" id="CHEBI:57945"/>
        <dbReference type="EC" id="1.4.1.3"/>
    </reaction>
</comment>
<comment type="catalytic activity">
    <reaction evidence="3">
        <text>L-glutamate + NADP(+) + H2O = 2-oxoglutarate + NH4(+) + NADPH + H(+)</text>
        <dbReference type="Rhea" id="RHEA:11612"/>
        <dbReference type="ChEBI" id="CHEBI:15377"/>
        <dbReference type="ChEBI" id="CHEBI:15378"/>
        <dbReference type="ChEBI" id="CHEBI:16810"/>
        <dbReference type="ChEBI" id="CHEBI:28938"/>
        <dbReference type="ChEBI" id="CHEBI:29985"/>
        <dbReference type="ChEBI" id="CHEBI:57783"/>
        <dbReference type="ChEBI" id="CHEBI:58349"/>
        <dbReference type="EC" id="1.4.1.3"/>
    </reaction>
</comment>
<comment type="activity regulation">
    <text evidence="4 5">Subject to allosteric regulation. Activated by AMP and ADP.</text>
</comment>
<comment type="biophysicochemical properties">
    <kinetics>
        <KM evidence="5">0.36 mM for alpha-ketoglutarate</KM>
        <KM evidence="5">16 uM for NADH</KM>
        <KM evidence="5">34.5 mM for NH(3)</KM>
    </kinetics>
    <phDependence>
        <text evidence="5">Optimum pH is 7.25 to 7.5.</text>
    </phDependence>
</comment>
<comment type="subunit">
    <text evidence="5">Homohexamer.</text>
</comment>
<comment type="subcellular location">
    <subcellularLocation>
        <location evidence="1">Mitochondrion matrix</location>
    </subcellularLocation>
</comment>
<comment type="miscellaneous">
    <text evidence="1">ADP can occupy the NADH binding site and activate the enzyme.</text>
</comment>
<comment type="similarity">
    <text evidence="6">Belongs to the Glu/Leu/Phe/Val dehydrogenases family.</text>
</comment>